<feature type="chain" id="PRO_1000134514" description="Acetyl-coenzyme A carboxylase carboxyl transferase subunit alpha">
    <location>
        <begin position="1"/>
        <end position="319"/>
    </location>
</feature>
<feature type="domain" description="CoA carboxyltransferase C-terminal" evidence="2">
    <location>
        <begin position="35"/>
        <end position="296"/>
    </location>
</feature>
<proteinExistence type="inferred from homology"/>
<accession>B5F8U6</accession>
<evidence type="ECO:0000255" key="1">
    <source>
        <dbReference type="HAMAP-Rule" id="MF_00823"/>
    </source>
</evidence>
<evidence type="ECO:0000255" key="2">
    <source>
        <dbReference type="PROSITE-ProRule" id="PRU01137"/>
    </source>
</evidence>
<reference key="1">
    <citation type="journal article" date="2011" name="J. Bacteriol.">
        <title>Comparative genomics of 28 Salmonella enterica isolates: evidence for CRISPR-mediated adaptive sublineage evolution.</title>
        <authorList>
            <person name="Fricke W.F."/>
            <person name="Mammel M.K."/>
            <person name="McDermott P.F."/>
            <person name="Tartera C."/>
            <person name="White D.G."/>
            <person name="Leclerc J.E."/>
            <person name="Ravel J."/>
            <person name="Cebula T.A."/>
        </authorList>
    </citation>
    <scope>NUCLEOTIDE SEQUENCE [LARGE SCALE GENOMIC DNA]</scope>
    <source>
        <strain>SL483</strain>
    </source>
</reference>
<keyword id="KW-0067">ATP-binding</keyword>
<keyword id="KW-0963">Cytoplasm</keyword>
<keyword id="KW-0275">Fatty acid biosynthesis</keyword>
<keyword id="KW-0276">Fatty acid metabolism</keyword>
<keyword id="KW-0444">Lipid biosynthesis</keyword>
<keyword id="KW-0443">Lipid metabolism</keyword>
<keyword id="KW-0547">Nucleotide-binding</keyword>
<keyword id="KW-0808">Transferase</keyword>
<sequence>MSLNFLDFEQPIAELEAKIDSLTAVSRQDEKLDINIDEEVHRLREKSVELTRKIFADLGAWQVAQLARHPQRPYTLDYVRLAFDEFDELAGDRAYADDKAIVGGIARLEGRPVMIIGHQKGRETKEKIRRNFGMPAPEGYRKALRLMEMAERFNMPIITFIDTPGAYPGVGAEERGQSEAIARNLREMSRLNVPVICTVIGEGGSGGALAIGVGDKVNMLQYSTYSVISPEGCASILWKSADKAPLAAEAMGIIAPRLKELKLIDSIIPEPLGGAHRNPEAMAASLKAQLLEDLADLDVLSTDDLKNRRYQRLMSYGYA</sequence>
<comment type="function">
    <text evidence="1">Component of the acetyl coenzyme A carboxylase (ACC) complex. First, biotin carboxylase catalyzes the carboxylation of biotin on its carrier protein (BCCP) and then the CO(2) group is transferred by the carboxyltransferase to acetyl-CoA to form malonyl-CoA.</text>
</comment>
<comment type="catalytic activity">
    <reaction evidence="1">
        <text>N(6)-carboxybiotinyl-L-lysyl-[protein] + acetyl-CoA = N(6)-biotinyl-L-lysyl-[protein] + malonyl-CoA</text>
        <dbReference type="Rhea" id="RHEA:54728"/>
        <dbReference type="Rhea" id="RHEA-COMP:10505"/>
        <dbReference type="Rhea" id="RHEA-COMP:10506"/>
        <dbReference type="ChEBI" id="CHEBI:57288"/>
        <dbReference type="ChEBI" id="CHEBI:57384"/>
        <dbReference type="ChEBI" id="CHEBI:83144"/>
        <dbReference type="ChEBI" id="CHEBI:83145"/>
        <dbReference type="EC" id="2.1.3.15"/>
    </reaction>
</comment>
<comment type="pathway">
    <text evidence="1">Lipid metabolism; malonyl-CoA biosynthesis; malonyl-CoA from acetyl-CoA: step 1/1.</text>
</comment>
<comment type="subunit">
    <text evidence="1">Acetyl-CoA carboxylase is a heterohexamer composed of biotin carboxyl carrier protein (AccB), biotin carboxylase (AccC) and two subunits each of ACCase subunit alpha (AccA) and ACCase subunit beta (AccD).</text>
</comment>
<comment type="subcellular location">
    <subcellularLocation>
        <location evidence="1">Cytoplasm</location>
    </subcellularLocation>
</comment>
<comment type="similarity">
    <text evidence="1">Belongs to the AccA family.</text>
</comment>
<protein>
    <recommendedName>
        <fullName evidence="1">Acetyl-coenzyme A carboxylase carboxyl transferase subunit alpha</fullName>
        <shortName evidence="1">ACCase subunit alpha</shortName>
        <shortName evidence="1">Acetyl-CoA carboxylase carboxyltransferase subunit alpha</shortName>
        <ecNumber evidence="1">2.1.3.15</ecNumber>
    </recommendedName>
</protein>
<organism>
    <name type="scientific">Salmonella agona (strain SL483)</name>
    <dbReference type="NCBI Taxonomy" id="454166"/>
    <lineage>
        <taxon>Bacteria</taxon>
        <taxon>Pseudomonadati</taxon>
        <taxon>Pseudomonadota</taxon>
        <taxon>Gammaproteobacteria</taxon>
        <taxon>Enterobacterales</taxon>
        <taxon>Enterobacteriaceae</taxon>
        <taxon>Salmonella</taxon>
    </lineage>
</organism>
<dbReference type="EC" id="2.1.3.15" evidence="1"/>
<dbReference type="EMBL" id="CP001138">
    <property type="protein sequence ID" value="ACH52567.1"/>
    <property type="molecule type" value="Genomic_DNA"/>
</dbReference>
<dbReference type="RefSeq" id="WP_000055753.1">
    <property type="nucleotide sequence ID" value="NC_011149.1"/>
</dbReference>
<dbReference type="SMR" id="B5F8U6"/>
<dbReference type="KEGG" id="sea:SeAg_B0273"/>
<dbReference type="HOGENOM" id="CLU_015486_0_2_6"/>
<dbReference type="UniPathway" id="UPA00655">
    <property type="reaction ID" value="UER00711"/>
</dbReference>
<dbReference type="Proteomes" id="UP000008819">
    <property type="component" value="Chromosome"/>
</dbReference>
<dbReference type="GO" id="GO:0009317">
    <property type="term" value="C:acetyl-CoA carboxylase complex"/>
    <property type="evidence" value="ECO:0007669"/>
    <property type="project" value="InterPro"/>
</dbReference>
<dbReference type="GO" id="GO:0003989">
    <property type="term" value="F:acetyl-CoA carboxylase activity"/>
    <property type="evidence" value="ECO:0007669"/>
    <property type="project" value="InterPro"/>
</dbReference>
<dbReference type="GO" id="GO:0005524">
    <property type="term" value="F:ATP binding"/>
    <property type="evidence" value="ECO:0007669"/>
    <property type="project" value="UniProtKB-KW"/>
</dbReference>
<dbReference type="GO" id="GO:0016743">
    <property type="term" value="F:carboxyl- or carbamoyltransferase activity"/>
    <property type="evidence" value="ECO:0007669"/>
    <property type="project" value="UniProtKB-UniRule"/>
</dbReference>
<dbReference type="GO" id="GO:0006633">
    <property type="term" value="P:fatty acid biosynthetic process"/>
    <property type="evidence" value="ECO:0007669"/>
    <property type="project" value="UniProtKB-KW"/>
</dbReference>
<dbReference type="GO" id="GO:2001295">
    <property type="term" value="P:malonyl-CoA biosynthetic process"/>
    <property type="evidence" value="ECO:0007669"/>
    <property type="project" value="UniProtKB-UniRule"/>
</dbReference>
<dbReference type="FunFam" id="3.90.226.10:FF:000008">
    <property type="entry name" value="Acetyl-coenzyme A carboxylase carboxyl transferase subunit alpha"/>
    <property type="match status" value="1"/>
</dbReference>
<dbReference type="Gene3D" id="3.90.226.10">
    <property type="entry name" value="2-enoyl-CoA Hydratase, Chain A, domain 1"/>
    <property type="match status" value="1"/>
</dbReference>
<dbReference type="HAMAP" id="MF_00823">
    <property type="entry name" value="AcetylCoA_CT_alpha"/>
    <property type="match status" value="1"/>
</dbReference>
<dbReference type="InterPro" id="IPR001095">
    <property type="entry name" value="Acetyl_CoA_COase_a_su"/>
</dbReference>
<dbReference type="InterPro" id="IPR029045">
    <property type="entry name" value="ClpP/crotonase-like_dom_sf"/>
</dbReference>
<dbReference type="InterPro" id="IPR011763">
    <property type="entry name" value="COA_CT_C"/>
</dbReference>
<dbReference type="NCBIfam" id="TIGR00513">
    <property type="entry name" value="accA"/>
    <property type="match status" value="1"/>
</dbReference>
<dbReference type="NCBIfam" id="NF041504">
    <property type="entry name" value="AccA_sub"/>
    <property type="match status" value="1"/>
</dbReference>
<dbReference type="NCBIfam" id="NF004344">
    <property type="entry name" value="PRK05724.1"/>
    <property type="match status" value="1"/>
</dbReference>
<dbReference type="PANTHER" id="PTHR42853">
    <property type="entry name" value="ACETYL-COENZYME A CARBOXYLASE CARBOXYL TRANSFERASE SUBUNIT ALPHA"/>
    <property type="match status" value="1"/>
</dbReference>
<dbReference type="PANTHER" id="PTHR42853:SF3">
    <property type="entry name" value="ACETYL-COENZYME A CARBOXYLASE CARBOXYL TRANSFERASE SUBUNIT ALPHA, CHLOROPLASTIC"/>
    <property type="match status" value="1"/>
</dbReference>
<dbReference type="Pfam" id="PF03255">
    <property type="entry name" value="ACCA"/>
    <property type="match status" value="1"/>
</dbReference>
<dbReference type="PRINTS" id="PR01069">
    <property type="entry name" value="ACCCTRFRASEA"/>
</dbReference>
<dbReference type="SUPFAM" id="SSF52096">
    <property type="entry name" value="ClpP/crotonase"/>
    <property type="match status" value="1"/>
</dbReference>
<dbReference type="PROSITE" id="PS50989">
    <property type="entry name" value="COA_CT_CTER"/>
    <property type="match status" value="1"/>
</dbReference>
<gene>
    <name evidence="1" type="primary">accA</name>
    <name type="ordered locus">SeAg_B0273</name>
</gene>
<name>ACCA_SALA4</name>